<dbReference type="EC" id="5.4.99.12" evidence="1"/>
<dbReference type="EMBL" id="CP000482">
    <property type="protein sequence ID" value="ABL00975.1"/>
    <property type="molecule type" value="Genomic_DNA"/>
</dbReference>
<dbReference type="RefSeq" id="WP_011737191.1">
    <property type="nucleotide sequence ID" value="NC_008609.1"/>
</dbReference>
<dbReference type="SMR" id="A1AUF4"/>
<dbReference type="STRING" id="338966.Ppro_3382"/>
<dbReference type="KEGG" id="ppd:Ppro_3382"/>
<dbReference type="eggNOG" id="COG0101">
    <property type="taxonomic scope" value="Bacteria"/>
</dbReference>
<dbReference type="HOGENOM" id="CLU_014673_0_1_7"/>
<dbReference type="OrthoDB" id="9811823at2"/>
<dbReference type="Proteomes" id="UP000006732">
    <property type="component" value="Chromosome"/>
</dbReference>
<dbReference type="GO" id="GO:0003723">
    <property type="term" value="F:RNA binding"/>
    <property type="evidence" value="ECO:0007669"/>
    <property type="project" value="InterPro"/>
</dbReference>
<dbReference type="GO" id="GO:0160147">
    <property type="term" value="F:tRNA pseudouridine(38-40) synthase activity"/>
    <property type="evidence" value="ECO:0007669"/>
    <property type="project" value="UniProtKB-EC"/>
</dbReference>
<dbReference type="GO" id="GO:0031119">
    <property type="term" value="P:tRNA pseudouridine synthesis"/>
    <property type="evidence" value="ECO:0007669"/>
    <property type="project" value="UniProtKB-UniRule"/>
</dbReference>
<dbReference type="CDD" id="cd02570">
    <property type="entry name" value="PseudoU_synth_EcTruA"/>
    <property type="match status" value="1"/>
</dbReference>
<dbReference type="FunFam" id="3.30.70.580:FF:000001">
    <property type="entry name" value="tRNA pseudouridine synthase A"/>
    <property type="match status" value="1"/>
</dbReference>
<dbReference type="Gene3D" id="3.30.70.660">
    <property type="entry name" value="Pseudouridine synthase I, catalytic domain, C-terminal subdomain"/>
    <property type="match status" value="1"/>
</dbReference>
<dbReference type="Gene3D" id="3.30.70.580">
    <property type="entry name" value="Pseudouridine synthase I, catalytic domain, N-terminal subdomain"/>
    <property type="match status" value="1"/>
</dbReference>
<dbReference type="HAMAP" id="MF_00171">
    <property type="entry name" value="TruA"/>
    <property type="match status" value="1"/>
</dbReference>
<dbReference type="InterPro" id="IPR020103">
    <property type="entry name" value="PsdUridine_synth_cat_dom_sf"/>
</dbReference>
<dbReference type="InterPro" id="IPR001406">
    <property type="entry name" value="PsdUridine_synth_TruA"/>
</dbReference>
<dbReference type="InterPro" id="IPR020097">
    <property type="entry name" value="PsdUridine_synth_TruA_a/b_dom"/>
</dbReference>
<dbReference type="InterPro" id="IPR020095">
    <property type="entry name" value="PsdUridine_synth_TruA_C"/>
</dbReference>
<dbReference type="InterPro" id="IPR020094">
    <property type="entry name" value="TruA/RsuA/RluB/E/F_N"/>
</dbReference>
<dbReference type="NCBIfam" id="TIGR00071">
    <property type="entry name" value="hisT_truA"/>
    <property type="match status" value="1"/>
</dbReference>
<dbReference type="PANTHER" id="PTHR11142">
    <property type="entry name" value="PSEUDOURIDYLATE SYNTHASE"/>
    <property type="match status" value="1"/>
</dbReference>
<dbReference type="PANTHER" id="PTHR11142:SF0">
    <property type="entry name" value="TRNA PSEUDOURIDINE SYNTHASE-LIKE 1"/>
    <property type="match status" value="1"/>
</dbReference>
<dbReference type="Pfam" id="PF01416">
    <property type="entry name" value="PseudoU_synth_1"/>
    <property type="match status" value="2"/>
</dbReference>
<dbReference type="PIRSF" id="PIRSF001430">
    <property type="entry name" value="tRNA_psdUrid_synth"/>
    <property type="match status" value="1"/>
</dbReference>
<dbReference type="SUPFAM" id="SSF55120">
    <property type="entry name" value="Pseudouridine synthase"/>
    <property type="match status" value="1"/>
</dbReference>
<comment type="function">
    <text evidence="1">Formation of pseudouridine at positions 38, 39 and 40 in the anticodon stem and loop of transfer RNAs.</text>
</comment>
<comment type="catalytic activity">
    <reaction evidence="1">
        <text>uridine(38/39/40) in tRNA = pseudouridine(38/39/40) in tRNA</text>
        <dbReference type="Rhea" id="RHEA:22376"/>
        <dbReference type="Rhea" id="RHEA-COMP:10085"/>
        <dbReference type="Rhea" id="RHEA-COMP:10087"/>
        <dbReference type="ChEBI" id="CHEBI:65314"/>
        <dbReference type="ChEBI" id="CHEBI:65315"/>
        <dbReference type="EC" id="5.4.99.12"/>
    </reaction>
</comment>
<comment type="subunit">
    <text evidence="1">Homodimer.</text>
</comment>
<comment type="similarity">
    <text evidence="1">Belongs to the tRNA pseudouridine synthase TruA family.</text>
</comment>
<keyword id="KW-0413">Isomerase</keyword>
<keyword id="KW-1185">Reference proteome</keyword>
<keyword id="KW-0819">tRNA processing</keyword>
<feature type="chain" id="PRO_1000017132" description="tRNA pseudouridine synthase A">
    <location>
        <begin position="1"/>
        <end position="244"/>
    </location>
</feature>
<feature type="active site" description="Nucleophile" evidence="1">
    <location>
        <position position="52"/>
    </location>
</feature>
<feature type="binding site" evidence="1">
    <location>
        <position position="110"/>
    </location>
    <ligand>
        <name>substrate</name>
    </ligand>
</feature>
<name>TRUA_PELPD</name>
<proteinExistence type="inferred from homology"/>
<organism>
    <name type="scientific">Pelobacter propionicus (strain DSM 2379 / NBRC 103807 / OttBd1)</name>
    <dbReference type="NCBI Taxonomy" id="338966"/>
    <lineage>
        <taxon>Bacteria</taxon>
        <taxon>Pseudomonadati</taxon>
        <taxon>Thermodesulfobacteriota</taxon>
        <taxon>Desulfuromonadia</taxon>
        <taxon>Desulfuromonadales</taxon>
        <taxon>Desulfuromonadaceae</taxon>
        <taxon>Pelobacter</taxon>
    </lineage>
</organism>
<sequence length="244" mass="27098">MRTIKLTIEYDGTNYAGWQVQPNGLAVQQVLEEALLRLLGERVRLRSSGRTDAGVHARAMVASFTTSRSLPLQAFVGGANRFLPDDIAILSAAEAAPEFRPIQDARSKWYRYTIYNAPVRSPLRRLFSWHVREPLDTDAMQLAAHHFPGRHDFAAFRASNCAAKTTLRRIDSVTIASEGELIVIDVIGEGFLKNMVRVMAGTLVDVGRGRFEPERVAWLLENPDRKKAGVTAPACGLCLMDVSY</sequence>
<gene>
    <name evidence="1" type="primary">truA</name>
    <name type="ordered locus">Ppro_3382</name>
</gene>
<protein>
    <recommendedName>
        <fullName evidence="1">tRNA pseudouridine synthase A</fullName>
        <ecNumber evidence="1">5.4.99.12</ecNumber>
    </recommendedName>
    <alternativeName>
        <fullName evidence="1">tRNA pseudouridine(38-40) synthase</fullName>
    </alternativeName>
    <alternativeName>
        <fullName evidence="1">tRNA pseudouridylate synthase I</fullName>
    </alternativeName>
    <alternativeName>
        <fullName evidence="1">tRNA-uridine isomerase I</fullName>
    </alternativeName>
</protein>
<reference key="1">
    <citation type="submission" date="2006-10" db="EMBL/GenBank/DDBJ databases">
        <title>Complete sequence of chromosome of Pelobacter propionicus DSM 2379.</title>
        <authorList>
            <consortium name="US DOE Joint Genome Institute"/>
            <person name="Copeland A."/>
            <person name="Lucas S."/>
            <person name="Lapidus A."/>
            <person name="Barry K."/>
            <person name="Detter J.C."/>
            <person name="Glavina del Rio T."/>
            <person name="Hammon N."/>
            <person name="Israni S."/>
            <person name="Dalin E."/>
            <person name="Tice H."/>
            <person name="Pitluck S."/>
            <person name="Saunders E."/>
            <person name="Brettin T."/>
            <person name="Bruce D."/>
            <person name="Han C."/>
            <person name="Tapia R."/>
            <person name="Schmutz J."/>
            <person name="Larimer F."/>
            <person name="Land M."/>
            <person name="Hauser L."/>
            <person name="Kyrpides N."/>
            <person name="Kim E."/>
            <person name="Lovley D."/>
            <person name="Richardson P."/>
        </authorList>
    </citation>
    <scope>NUCLEOTIDE SEQUENCE [LARGE SCALE GENOMIC DNA]</scope>
    <source>
        <strain>DSM 2379 / NBRC 103807 / OttBd1</strain>
    </source>
</reference>
<accession>A1AUF4</accession>
<evidence type="ECO:0000255" key="1">
    <source>
        <dbReference type="HAMAP-Rule" id="MF_00171"/>
    </source>
</evidence>